<keyword id="KW-0963">Cytoplasm</keyword>
<keyword id="KW-0227">DNA damage</keyword>
<keyword id="KW-0228">DNA excision</keyword>
<keyword id="KW-0234">DNA repair</keyword>
<keyword id="KW-0267">Excision nuclease</keyword>
<keyword id="KW-0742">SOS response</keyword>
<name>UVRC_PSEPW</name>
<reference key="1">
    <citation type="submission" date="2008-02" db="EMBL/GenBank/DDBJ databases">
        <title>Complete sequence of Pseudomonas putida W619.</title>
        <authorList>
            <person name="Copeland A."/>
            <person name="Lucas S."/>
            <person name="Lapidus A."/>
            <person name="Barry K."/>
            <person name="Detter J.C."/>
            <person name="Glavina del Rio T."/>
            <person name="Dalin E."/>
            <person name="Tice H."/>
            <person name="Pitluck S."/>
            <person name="Chain P."/>
            <person name="Malfatti S."/>
            <person name="Shin M."/>
            <person name="Vergez L."/>
            <person name="Schmutz J."/>
            <person name="Larimer F."/>
            <person name="Land M."/>
            <person name="Hauser L."/>
            <person name="Kyrpides N."/>
            <person name="Kim E."/>
            <person name="Taghavi S."/>
            <person name="Vangronsveld D."/>
            <person name="van der Lelie D."/>
            <person name="Richardson P."/>
        </authorList>
    </citation>
    <scope>NUCLEOTIDE SEQUENCE [LARGE SCALE GENOMIC DNA]</scope>
    <source>
        <strain>W619</strain>
    </source>
</reference>
<protein>
    <recommendedName>
        <fullName evidence="1">UvrABC system protein C</fullName>
        <shortName evidence="1">Protein UvrC</shortName>
    </recommendedName>
    <alternativeName>
        <fullName evidence="1">Excinuclease ABC subunit C</fullName>
    </alternativeName>
</protein>
<dbReference type="EMBL" id="CP000949">
    <property type="protein sequence ID" value="ACA73858.1"/>
    <property type="molecule type" value="Genomic_DNA"/>
</dbReference>
<dbReference type="SMR" id="B1JB85"/>
<dbReference type="STRING" id="390235.PputW619_3374"/>
<dbReference type="KEGG" id="ppw:PputW619_3374"/>
<dbReference type="eggNOG" id="COG0322">
    <property type="taxonomic scope" value="Bacteria"/>
</dbReference>
<dbReference type="HOGENOM" id="CLU_014841_3_0_6"/>
<dbReference type="OrthoDB" id="9804933at2"/>
<dbReference type="GO" id="GO:0005737">
    <property type="term" value="C:cytoplasm"/>
    <property type="evidence" value="ECO:0007669"/>
    <property type="project" value="UniProtKB-SubCell"/>
</dbReference>
<dbReference type="GO" id="GO:0009380">
    <property type="term" value="C:excinuclease repair complex"/>
    <property type="evidence" value="ECO:0007669"/>
    <property type="project" value="InterPro"/>
</dbReference>
<dbReference type="GO" id="GO:0003677">
    <property type="term" value="F:DNA binding"/>
    <property type="evidence" value="ECO:0007669"/>
    <property type="project" value="UniProtKB-UniRule"/>
</dbReference>
<dbReference type="GO" id="GO:0009381">
    <property type="term" value="F:excinuclease ABC activity"/>
    <property type="evidence" value="ECO:0007669"/>
    <property type="project" value="UniProtKB-UniRule"/>
</dbReference>
<dbReference type="GO" id="GO:0006289">
    <property type="term" value="P:nucleotide-excision repair"/>
    <property type="evidence" value="ECO:0007669"/>
    <property type="project" value="UniProtKB-UniRule"/>
</dbReference>
<dbReference type="GO" id="GO:0009432">
    <property type="term" value="P:SOS response"/>
    <property type="evidence" value="ECO:0007669"/>
    <property type="project" value="UniProtKB-UniRule"/>
</dbReference>
<dbReference type="CDD" id="cd10434">
    <property type="entry name" value="GIY-YIG_UvrC_Cho"/>
    <property type="match status" value="1"/>
</dbReference>
<dbReference type="FunFam" id="1.10.150.20:FF:000005">
    <property type="entry name" value="UvrABC system protein C"/>
    <property type="match status" value="1"/>
</dbReference>
<dbReference type="FunFam" id="3.30.420.340:FF:000001">
    <property type="entry name" value="UvrABC system protein C"/>
    <property type="match status" value="1"/>
</dbReference>
<dbReference type="FunFam" id="3.40.1440.10:FF:000001">
    <property type="entry name" value="UvrABC system protein C"/>
    <property type="match status" value="1"/>
</dbReference>
<dbReference type="Gene3D" id="1.10.150.20">
    <property type="entry name" value="5' to 3' exonuclease, C-terminal subdomain"/>
    <property type="match status" value="1"/>
</dbReference>
<dbReference type="Gene3D" id="3.40.1440.10">
    <property type="entry name" value="GIY-YIG endonuclease"/>
    <property type="match status" value="1"/>
</dbReference>
<dbReference type="Gene3D" id="4.10.860.10">
    <property type="entry name" value="UVR domain"/>
    <property type="match status" value="1"/>
</dbReference>
<dbReference type="Gene3D" id="3.30.420.340">
    <property type="entry name" value="UvrC, RNAse H endonuclease domain"/>
    <property type="match status" value="1"/>
</dbReference>
<dbReference type="HAMAP" id="MF_00203">
    <property type="entry name" value="UvrC"/>
    <property type="match status" value="1"/>
</dbReference>
<dbReference type="InterPro" id="IPR000305">
    <property type="entry name" value="GIY-YIG_endonuc"/>
</dbReference>
<dbReference type="InterPro" id="IPR035901">
    <property type="entry name" value="GIY-YIG_endonuc_sf"/>
</dbReference>
<dbReference type="InterPro" id="IPR047296">
    <property type="entry name" value="GIY-YIG_UvrC_Cho"/>
</dbReference>
<dbReference type="InterPro" id="IPR003583">
    <property type="entry name" value="Hlx-hairpin-Hlx_DNA-bd_motif"/>
</dbReference>
<dbReference type="InterPro" id="IPR010994">
    <property type="entry name" value="RuvA_2-like"/>
</dbReference>
<dbReference type="InterPro" id="IPR001943">
    <property type="entry name" value="UVR_dom"/>
</dbReference>
<dbReference type="InterPro" id="IPR036876">
    <property type="entry name" value="UVR_dom_sf"/>
</dbReference>
<dbReference type="InterPro" id="IPR050066">
    <property type="entry name" value="UvrABC_protein_C"/>
</dbReference>
<dbReference type="InterPro" id="IPR004791">
    <property type="entry name" value="UvrC"/>
</dbReference>
<dbReference type="InterPro" id="IPR001162">
    <property type="entry name" value="UvrC_RNase_H_dom"/>
</dbReference>
<dbReference type="InterPro" id="IPR038476">
    <property type="entry name" value="UvrC_RNase_H_dom_sf"/>
</dbReference>
<dbReference type="NCBIfam" id="NF001824">
    <property type="entry name" value="PRK00558.1-5"/>
    <property type="match status" value="1"/>
</dbReference>
<dbReference type="NCBIfam" id="TIGR00194">
    <property type="entry name" value="uvrC"/>
    <property type="match status" value="1"/>
</dbReference>
<dbReference type="PANTHER" id="PTHR30562:SF1">
    <property type="entry name" value="UVRABC SYSTEM PROTEIN C"/>
    <property type="match status" value="1"/>
</dbReference>
<dbReference type="PANTHER" id="PTHR30562">
    <property type="entry name" value="UVRC/OXIDOREDUCTASE"/>
    <property type="match status" value="1"/>
</dbReference>
<dbReference type="Pfam" id="PF01541">
    <property type="entry name" value="GIY-YIG"/>
    <property type="match status" value="1"/>
</dbReference>
<dbReference type="Pfam" id="PF14520">
    <property type="entry name" value="HHH_5"/>
    <property type="match status" value="1"/>
</dbReference>
<dbReference type="Pfam" id="PF02151">
    <property type="entry name" value="UVR"/>
    <property type="match status" value="1"/>
</dbReference>
<dbReference type="Pfam" id="PF22920">
    <property type="entry name" value="UvrC_RNaseH"/>
    <property type="match status" value="1"/>
</dbReference>
<dbReference type="Pfam" id="PF08459">
    <property type="entry name" value="UvrC_RNaseH_dom"/>
    <property type="match status" value="1"/>
</dbReference>
<dbReference type="SMART" id="SM00465">
    <property type="entry name" value="GIYc"/>
    <property type="match status" value="1"/>
</dbReference>
<dbReference type="SMART" id="SM00278">
    <property type="entry name" value="HhH1"/>
    <property type="match status" value="2"/>
</dbReference>
<dbReference type="SUPFAM" id="SSF46600">
    <property type="entry name" value="C-terminal UvrC-binding domain of UvrB"/>
    <property type="match status" value="1"/>
</dbReference>
<dbReference type="SUPFAM" id="SSF82771">
    <property type="entry name" value="GIY-YIG endonuclease"/>
    <property type="match status" value="1"/>
</dbReference>
<dbReference type="SUPFAM" id="SSF47781">
    <property type="entry name" value="RuvA domain 2-like"/>
    <property type="match status" value="1"/>
</dbReference>
<dbReference type="PROSITE" id="PS50164">
    <property type="entry name" value="GIY_YIG"/>
    <property type="match status" value="1"/>
</dbReference>
<dbReference type="PROSITE" id="PS50151">
    <property type="entry name" value="UVR"/>
    <property type="match status" value="1"/>
</dbReference>
<dbReference type="PROSITE" id="PS50165">
    <property type="entry name" value="UVRC"/>
    <property type="match status" value="1"/>
</dbReference>
<comment type="function">
    <text evidence="1">The UvrABC repair system catalyzes the recognition and processing of DNA lesions. UvrC both incises the 5' and 3' sides of the lesion. The N-terminal half is responsible for the 3' incision and the C-terminal half is responsible for the 5' incision.</text>
</comment>
<comment type="subunit">
    <text evidence="1">Interacts with UvrB in an incision complex.</text>
</comment>
<comment type="subcellular location">
    <subcellularLocation>
        <location evidence="1">Cytoplasm</location>
    </subcellularLocation>
</comment>
<comment type="similarity">
    <text evidence="1">Belongs to the UvrC family.</text>
</comment>
<sequence>MSQVFDASAFLATCSARPGVYRMFDSETRLLYVGKAKNLKKRLASYFRKTGLAPKTAALVGRIAQVETTITANETEALLLEQNLIKQWRPPYNILLRDDKSYPYVFLSDGQFPRLGIHRGAKKAKGRYFGPYPSAGAIRESLSLLQKAFSVRQCEDSYYANRTRPCLQYQIKRCKGPCVGLVDAEEYAEDVRHSVMFLEGRSQQLGNELNAEMEKAAMALNFEKAAELRDQIALLRRVQDQQYMEGGSGDVDVVAAFVNPGGACVHLISVRGGRVLGSKNFFPQVGIEEEVAEVMAAFLSQYYLGNAERELPGELIVNVVHEDFAAISEALQTLRGRELTISHRVRGTRARWQQLAVTNAEQALNARLANRQHMAARFEALAEVLGLDEVPQRLECYDISHSSGEATVASCVVFGPEGPLKSDYRRFNIEGVTAGDDYAAMHQALTRRYGRIKDGEGKLPDVLLVDGGKGQLNMAREVMQELAFTDLTLLGVAKGVTRKAGFETLYLNDVAHEFTLKGDNPALHLIQQIRDEAHRFAITGHRARRGKARRVSSLEDVAGVGPKRRRDLLKHFGGLQELNRASIDEIAKAPGISKKLAESIYASLHSE</sequence>
<organism>
    <name type="scientific">Pseudomonas putida (strain W619)</name>
    <dbReference type="NCBI Taxonomy" id="390235"/>
    <lineage>
        <taxon>Bacteria</taxon>
        <taxon>Pseudomonadati</taxon>
        <taxon>Pseudomonadota</taxon>
        <taxon>Gammaproteobacteria</taxon>
        <taxon>Pseudomonadales</taxon>
        <taxon>Pseudomonadaceae</taxon>
        <taxon>Pseudomonas</taxon>
    </lineage>
</organism>
<accession>B1JB85</accession>
<gene>
    <name evidence="1" type="primary">uvrC</name>
    <name type="ordered locus">PputW619_3374</name>
</gene>
<feature type="chain" id="PRO_1000099510" description="UvrABC system protein C">
    <location>
        <begin position="1"/>
        <end position="607"/>
    </location>
</feature>
<feature type="domain" description="GIY-YIG" evidence="1">
    <location>
        <begin position="16"/>
        <end position="94"/>
    </location>
</feature>
<feature type="domain" description="UVR" evidence="1">
    <location>
        <begin position="203"/>
        <end position="238"/>
    </location>
</feature>
<proteinExistence type="inferred from homology"/>
<evidence type="ECO:0000255" key="1">
    <source>
        <dbReference type="HAMAP-Rule" id="MF_00203"/>
    </source>
</evidence>